<evidence type="ECO:0000255" key="1">
    <source>
        <dbReference type="HAMAP-Rule" id="MF_01393"/>
    </source>
</evidence>
<sequence>MAAEEHALTSTEYIKHHLTNMTYGKMPDGTWKLAETAEEAHSMGFTAIHLDSMGWSIGLGVIFCLLFWIVARAANAGVPTKFQSAIEMIIEFVDSSVRDTFHGKSRLIAPLALTIFVWIFLMNLMDLIPVDWIPQVAAFVGANVFGMDPHHVYFKIVPSTDPNITLGMSLSVFVLILFYSIREKGVGGFVGELALNPFNPSNPVAKALLIPVNLILELVTFLARPISLALRLFGNMYAGELIFILIALLPFWIQWALSVPWAIFHILVITLQAFIFMMLTIVYLSMASEKH</sequence>
<feature type="chain" id="PRO_0000362218" description="ATP synthase subunit a">
    <location>
        <begin position="1"/>
        <end position="291"/>
    </location>
</feature>
<feature type="transmembrane region" description="Helical" evidence="1">
    <location>
        <begin position="50"/>
        <end position="70"/>
    </location>
</feature>
<feature type="transmembrane region" description="Helical" evidence="1">
    <location>
        <begin position="108"/>
        <end position="128"/>
    </location>
</feature>
<feature type="transmembrane region" description="Helical" evidence="1">
    <location>
        <begin position="129"/>
        <end position="149"/>
    </location>
</feature>
<feature type="transmembrane region" description="Helical" evidence="1">
    <location>
        <begin position="161"/>
        <end position="181"/>
    </location>
</feature>
<feature type="transmembrane region" description="Helical" evidence="1">
    <location>
        <begin position="203"/>
        <end position="223"/>
    </location>
</feature>
<feature type="transmembrane region" description="Helical" evidence="1">
    <location>
        <begin position="241"/>
        <end position="261"/>
    </location>
</feature>
<feature type="transmembrane region" description="Helical" evidence="1">
    <location>
        <begin position="262"/>
        <end position="282"/>
    </location>
</feature>
<reference key="1">
    <citation type="journal article" date="2008" name="Antimicrob. Agents Chemother.">
        <title>Whole-genome pyrosequencing of an epidemic multidrug-resistant Acinetobacter baumannii strain belonging to the European clone II group.</title>
        <authorList>
            <person name="Iacono M."/>
            <person name="Villa L."/>
            <person name="Fortini D."/>
            <person name="Bordoni R."/>
            <person name="Imperi F."/>
            <person name="Bonnal R.J."/>
            <person name="Sicheritz-Ponten T."/>
            <person name="De Bellis G."/>
            <person name="Visca P."/>
            <person name="Cassone A."/>
            <person name="Carattoli A."/>
        </authorList>
    </citation>
    <scope>NUCLEOTIDE SEQUENCE [LARGE SCALE GENOMIC DNA]</scope>
    <source>
        <strain>ACICU</strain>
    </source>
</reference>
<organism>
    <name type="scientific">Acinetobacter baumannii (strain ACICU)</name>
    <dbReference type="NCBI Taxonomy" id="405416"/>
    <lineage>
        <taxon>Bacteria</taxon>
        <taxon>Pseudomonadati</taxon>
        <taxon>Pseudomonadota</taxon>
        <taxon>Gammaproteobacteria</taxon>
        <taxon>Moraxellales</taxon>
        <taxon>Moraxellaceae</taxon>
        <taxon>Acinetobacter</taxon>
        <taxon>Acinetobacter calcoaceticus/baumannii complex</taxon>
    </lineage>
</organism>
<proteinExistence type="inferred from homology"/>
<gene>
    <name evidence="1" type="primary">atpB</name>
    <name type="ordered locus">ACICU_00172</name>
</gene>
<protein>
    <recommendedName>
        <fullName evidence="1">ATP synthase subunit a</fullName>
    </recommendedName>
    <alternativeName>
        <fullName evidence="1">ATP synthase F0 sector subunit a</fullName>
    </alternativeName>
    <alternativeName>
        <fullName evidence="1">F-ATPase subunit 6</fullName>
    </alternativeName>
</protein>
<dbReference type="EMBL" id="CP000863">
    <property type="protein sequence ID" value="ACC55484.1"/>
    <property type="molecule type" value="Genomic_DNA"/>
</dbReference>
<dbReference type="RefSeq" id="WP_000718586.1">
    <property type="nucleotide sequence ID" value="NZ_CP031380.1"/>
</dbReference>
<dbReference type="SMR" id="B2I0Z6"/>
<dbReference type="GeneID" id="92892161"/>
<dbReference type="KEGG" id="abc:ACICU_00172"/>
<dbReference type="HOGENOM" id="CLU_041018_1_0_6"/>
<dbReference type="Proteomes" id="UP000008839">
    <property type="component" value="Chromosome"/>
</dbReference>
<dbReference type="GO" id="GO:0005886">
    <property type="term" value="C:plasma membrane"/>
    <property type="evidence" value="ECO:0007669"/>
    <property type="project" value="UniProtKB-SubCell"/>
</dbReference>
<dbReference type="GO" id="GO:0045259">
    <property type="term" value="C:proton-transporting ATP synthase complex"/>
    <property type="evidence" value="ECO:0007669"/>
    <property type="project" value="UniProtKB-KW"/>
</dbReference>
<dbReference type="GO" id="GO:0046933">
    <property type="term" value="F:proton-transporting ATP synthase activity, rotational mechanism"/>
    <property type="evidence" value="ECO:0007669"/>
    <property type="project" value="UniProtKB-UniRule"/>
</dbReference>
<dbReference type="GO" id="GO:0042777">
    <property type="term" value="P:proton motive force-driven plasma membrane ATP synthesis"/>
    <property type="evidence" value="ECO:0007669"/>
    <property type="project" value="TreeGrafter"/>
</dbReference>
<dbReference type="CDD" id="cd00310">
    <property type="entry name" value="ATP-synt_Fo_a_6"/>
    <property type="match status" value="1"/>
</dbReference>
<dbReference type="FunFam" id="1.20.120.220:FF:000002">
    <property type="entry name" value="ATP synthase subunit a"/>
    <property type="match status" value="1"/>
</dbReference>
<dbReference type="Gene3D" id="1.20.120.220">
    <property type="entry name" value="ATP synthase, F0 complex, subunit A"/>
    <property type="match status" value="1"/>
</dbReference>
<dbReference type="HAMAP" id="MF_01393">
    <property type="entry name" value="ATP_synth_a_bact"/>
    <property type="match status" value="1"/>
</dbReference>
<dbReference type="InterPro" id="IPR045082">
    <property type="entry name" value="ATP_syn_F0_a_bact/chloroplast"/>
</dbReference>
<dbReference type="InterPro" id="IPR000568">
    <property type="entry name" value="ATP_synth_F0_asu"/>
</dbReference>
<dbReference type="InterPro" id="IPR023011">
    <property type="entry name" value="ATP_synth_F0_asu_AS"/>
</dbReference>
<dbReference type="InterPro" id="IPR035908">
    <property type="entry name" value="F0_ATP_A_sf"/>
</dbReference>
<dbReference type="NCBIfam" id="TIGR01131">
    <property type="entry name" value="ATP_synt_6_or_A"/>
    <property type="match status" value="1"/>
</dbReference>
<dbReference type="NCBIfam" id="NF004477">
    <property type="entry name" value="PRK05815.1-1"/>
    <property type="match status" value="1"/>
</dbReference>
<dbReference type="PANTHER" id="PTHR42823">
    <property type="entry name" value="ATP SYNTHASE SUBUNIT A, CHLOROPLASTIC"/>
    <property type="match status" value="1"/>
</dbReference>
<dbReference type="PANTHER" id="PTHR42823:SF3">
    <property type="entry name" value="ATP SYNTHASE SUBUNIT A, CHLOROPLASTIC"/>
    <property type="match status" value="1"/>
</dbReference>
<dbReference type="Pfam" id="PF00119">
    <property type="entry name" value="ATP-synt_A"/>
    <property type="match status" value="1"/>
</dbReference>
<dbReference type="SUPFAM" id="SSF81336">
    <property type="entry name" value="F1F0 ATP synthase subunit A"/>
    <property type="match status" value="1"/>
</dbReference>
<dbReference type="PROSITE" id="PS00449">
    <property type="entry name" value="ATPASE_A"/>
    <property type="match status" value="1"/>
</dbReference>
<comment type="function">
    <text evidence="1">Key component of the proton channel; it plays a direct role in the translocation of protons across the membrane.</text>
</comment>
<comment type="subunit">
    <text evidence="1">F-type ATPases have 2 components, CF(1) - the catalytic core - and CF(0) - the membrane proton channel. CF(1) has five subunits: alpha(3), beta(3), gamma(1), delta(1), epsilon(1). CF(0) has three main subunits: a(1), b(2) and c(9-12). The alpha and beta chains form an alternating ring which encloses part of the gamma chain. CF(1) is attached to CF(0) by a central stalk formed by the gamma and epsilon chains, while a peripheral stalk is formed by the delta and b chains.</text>
</comment>
<comment type="subcellular location">
    <subcellularLocation>
        <location evidence="1">Cell inner membrane</location>
        <topology evidence="1">Multi-pass membrane protein</topology>
    </subcellularLocation>
</comment>
<comment type="similarity">
    <text evidence="1">Belongs to the ATPase A chain family.</text>
</comment>
<keyword id="KW-0066">ATP synthesis</keyword>
<keyword id="KW-0997">Cell inner membrane</keyword>
<keyword id="KW-1003">Cell membrane</keyword>
<keyword id="KW-0138">CF(0)</keyword>
<keyword id="KW-0375">Hydrogen ion transport</keyword>
<keyword id="KW-0406">Ion transport</keyword>
<keyword id="KW-0472">Membrane</keyword>
<keyword id="KW-0812">Transmembrane</keyword>
<keyword id="KW-1133">Transmembrane helix</keyword>
<keyword id="KW-0813">Transport</keyword>
<name>ATP6_ACIBC</name>
<accession>B2I0Z6</accession>